<dbReference type="EC" id="6.1.1.17" evidence="1"/>
<dbReference type="EMBL" id="CP000507">
    <property type="protein sequence ID" value="ABM00413.1"/>
    <property type="molecule type" value="Genomic_DNA"/>
</dbReference>
<dbReference type="RefSeq" id="WP_011760320.1">
    <property type="nucleotide sequence ID" value="NC_008700.1"/>
</dbReference>
<dbReference type="SMR" id="A1S7Q6"/>
<dbReference type="STRING" id="326297.Sama_2207"/>
<dbReference type="KEGG" id="saz:Sama_2207"/>
<dbReference type="eggNOG" id="COG0008">
    <property type="taxonomic scope" value="Bacteria"/>
</dbReference>
<dbReference type="HOGENOM" id="CLU_015768_6_3_6"/>
<dbReference type="OrthoDB" id="9807503at2"/>
<dbReference type="Proteomes" id="UP000009175">
    <property type="component" value="Chromosome"/>
</dbReference>
<dbReference type="GO" id="GO:0005829">
    <property type="term" value="C:cytosol"/>
    <property type="evidence" value="ECO:0007669"/>
    <property type="project" value="TreeGrafter"/>
</dbReference>
<dbReference type="GO" id="GO:0005524">
    <property type="term" value="F:ATP binding"/>
    <property type="evidence" value="ECO:0007669"/>
    <property type="project" value="UniProtKB-UniRule"/>
</dbReference>
<dbReference type="GO" id="GO:0004818">
    <property type="term" value="F:glutamate-tRNA ligase activity"/>
    <property type="evidence" value="ECO:0007669"/>
    <property type="project" value="UniProtKB-UniRule"/>
</dbReference>
<dbReference type="GO" id="GO:0000049">
    <property type="term" value="F:tRNA binding"/>
    <property type="evidence" value="ECO:0007669"/>
    <property type="project" value="InterPro"/>
</dbReference>
<dbReference type="GO" id="GO:0008270">
    <property type="term" value="F:zinc ion binding"/>
    <property type="evidence" value="ECO:0007669"/>
    <property type="project" value="InterPro"/>
</dbReference>
<dbReference type="GO" id="GO:0006424">
    <property type="term" value="P:glutamyl-tRNA aminoacylation"/>
    <property type="evidence" value="ECO:0007669"/>
    <property type="project" value="UniProtKB-UniRule"/>
</dbReference>
<dbReference type="CDD" id="cd00808">
    <property type="entry name" value="GluRS_core"/>
    <property type="match status" value="1"/>
</dbReference>
<dbReference type="FunFam" id="1.10.10.350:FF:000001">
    <property type="entry name" value="Glutamate--tRNA ligase"/>
    <property type="match status" value="1"/>
</dbReference>
<dbReference type="FunFam" id="3.40.50.620:FF:000007">
    <property type="entry name" value="Glutamate--tRNA ligase"/>
    <property type="match status" value="1"/>
</dbReference>
<dbReference type="Gene3D" id="1.10.10.350">
    <property type="match status" value="1"/>
</dbReference>
<dbReference type="Gene3D" id="3.40.50.620">
    <property type="entry name" value="HUPs"/>
    <property type="match status" value="1"/>
</dbReference>
<dbReference type="HAMAP" id="MF_00022">
    <property type="entry name" value="Glu_tRNA_synth_type1"/>
    <property type="match status" value="1"/>
</dbReference>
<dbReference type="InterPro" id="IPR045462">
    <property type="entry name" value="aa-tRNA-synth_I_cd-bd"/>
</dbReference>
<dbReference type="InterPro" id="IPR020751">
    <property type="entry name" value="aa-tRNA-synth_I_codon-bd_sub2"/>
</dbReference>
<dbReference type="InterPro" id="IPR001412">
    <property type="entry name" value="aa-tRNA-synth_I_CS"/>
</dbReference>
<dbReference type="InterPro" id="IPR008925">
    <property type="entry name" value="aa_tRNA-synth_I_cd-bd_sf"/>
</dbReference>
<dbReference type="InterPro" id="IPR004527">
    <property type="entry name" value="Glu-tRNA-ligase_bac/mito"/>
</dbReference>
<dbReference type="InterPro" id="IPR000924">
    <property type="entry name" value="Glu/Gln-tRNA-synth"/>
</dbReference>
<dbReference type="InterPro" id="IPR020058">
    <property type="entry name" value="Glu/Gln-tRNA-synth_Ib_cat-dom"/>
</dbReference>
<dbReference type="InterPro" id="IPR049940">
    <property type="entry name" value="GluQ/Sye"/>
</dbReference>
<dbReference type="InterPro" id="IPR033910">
    <property type="entry name" value="GluRS_core"/>
</dbReference>
<dbReference type="InterPro" id="IPR014729">
    <property type="entry name" value="Rossmann-like_a/b/a_fold"/>
</dbReference>
<dbReference type="NCBIfam" id="TIGR00464">
    <property type="entry name" value="gltX_bact"/>
    <property type="match status" value="1"/>
</dbReference>
<dbReference type="NCBIfam" id="NF004314">
    <property type="entry name" value="PRK05710.1-3"/>
    <property type="match status" value="1"/>
</dbReference>
<dbReference type="PANTHER" id="PTHR43311">
    <property type="entry name" value="GLUTAMATE--TRNA LIGASE"/>
    <property type="match status" value="1"/>
</dbReference>
<dbReference type="PANTHER" id="PTHR43311:SF2">
    <property type="entry name" value="GLUTAMATE--TRNA LIGASE, MITOCHONDRIAL-RELATED"/>
    <property type="match status" value="1"/>
</dbReference>
<dbReference type="Pfam" id="PF19269">
    <property type="entry name" value="Anticodon_2"/>
    <property type="match status" value="1"/>
</dbReference>
<dbReference type="Pfam" id="PF00749">
    <property type="entry name" value="tRNA-synt_1c"/>
    <property type="match status" value="1"/>
</dbReference>
<dbReference type="PRINTS" id="PR00987">
    <property type="entry name" value="TRNASYNTHGLU"/>
</dbReference>
<dbReference type="SUPFAM" id="SSF48163">
    <property type="entry name" value="An anticodon-binding domain of class I aminoacyl-tRNA synthetases"/>
    <property type="match status" value="1"/>
</dbReference>
<dbReference type="SUPFAM" id="SSF52374">
    <property type="entry name" value="Nucleotidylyl transferase"/>
    <property type="match status" value="1"/>
</dbReference>
<dbReference type="PROSITE" id="PS00178">
    <property type="entry name" value="AA_TRNA_LIGASE_I"/>
    <property type="match status" value="1"/>
</dbReference>
<organism>
    <name type="scientific">Shewanella amazonensis (strain ATCC BAA-1098 / SB2B)</name>
    <dbReference type="NCBI Taxonomy" id="326297"/>
    <lineage>
        <taxon>Bacteria</taxon>
        <taxon>Pseudomonadati</taxon>
        <taxon>Pseudomonadota</taxon>
        <taxon>Gammaproteobacteria</taxon>
        <taxon>Alteromonadales</taxon>
        <taxon>Shewanellaceae</taxon>
        <taxon>Shewanella</taxon>
    </lineage>
</organism>
<name>SYE_SHEAM</name>
<reference key="1">
    <citation type="submission" date="2006-12" db="EMBL/GenBank/DDBJ databases">
        <title>Complete sequence of Shewanella amazonensis SB2B.</title>
        <authorList>
            <consortium name="US DOE Joint Genome Institute"/>
            <person name="Copeland A."/>
            <person name="Lucas S."/>
            <person name="Lapidus A."/>
            <person name="Barry K."/>
            <person name="Detter J.C."/>
            <person name="Glavina del Rio T."/>
            <person name="Hammon N."/>
            <person name="Israni S."/>
            <person name="Dalin E."/>
            <person name="Tice H."/>
            <person name="Pitluck S."/>
            <person name="Munk A.C."/>
            <person name="Brettin T."/>
            <person name="Bruce D."/>
            <person name="Han C."/>
            <person name="Tapia R."/>
            <person name="Gilna P."/>
            <person name="Schmutz J."/>
            <person name="Larimer F."/>
            <person name="Land M."/>
            <person name="Hauser L."/>
            <person name="Kyrpides N."/>
            <person name="Mikhailova N."/>
            <person name="Fredrickson J."/>
            <person name="Richardson P."/>
        </authorList>
    </citation>
    <scope>NUCLEOTIDE SEQUENCE [LARGE SCALE GENOMIC DNA]</scope>
    <source>
        <strain>ATCC BAA-1098 / SB2B</strain>
    </source>
</reference>
<feature type="chain" id="PRO_1000001955" description="Glutamate--tRNA ligase">
    <location>
        <begin position="1"/>
        <end position="469"/>
    </location>
</feature>
<feature type="short sequence motif" description="'HIGH' region" evidence="1">
    <location>
        <begin position="9"/>
        <end position="19"/>
    </location>
</feature>
<feature type="short sequence motif" description="'KMSKS' region" evidence="1">
    <location>
        <begin position="236"/>
        <end position="240"/>
    </location>
</feature>
<feature type="binding site" evidence="1">
    <location>
        <position position="239"/>
    </location>
    <ligand>
        <name>ATP</name>
        <dbReference type="ChEBI" id="CHEBI:30616"/>
    </ligand>
</feature>
<protein>
    <recommendedName>
        <fullName evidence="1">Glutamate--tRNA ligase</fullName>
        <ecNumber evidence="1">6.1.1.17</ecNumber>
    </recommendedName>
    <alternativeName>
        <fullName evidence="1">Glutamyl-tRNA synthetase</fullName>
        <shortName evidence="1">GluRS</shortName>
    </alternativeName>
</protein>
<evidence type="ECO:0000255" key="1">
    <source>
        <dbReference type="HAMAP-Rule" id="MF_00022"/>
    </source>
</evidence>
<gene>
    <name evidence="1" type="primary">gltX</name>
    <name type="ordered locus">Sama_2207</name>
</gene>
<sequence length="469" mass="52814">MTVKTRFAPSPTGFLHVGGARTALYSWLHARANQGEFVLRIEDTDLERSTQEAVDAILEGMEWLNLNWDEGPYYQTKRFDRYNEIIDQMLKAGTAYKCYCSKERLEAVREEQAAKGERQKYDGCCRGAAPRAEGEPHVVRFLNPQGGSVVFDDHVRGRIEIANEELDDLIIRRTDGSPTYNFCVVVDDWDMGITHVVRGEDHINNTPRQINILKALGAPIPEYAHVSMILGDDGAKLSKRHGAVSVMQYRDDGYLPEALLNYLVRLGWSHGDQEIFSMDELVEFFRLDDINKAASAFNSEKLLWLNQHYIKALDPEYVAKHLEWHMKDQGIDTSNGPALADVVTALSERAKTLKELAASSRYFYEDFEEFDADQAKKHLRGVALEPLKLVQQKLAALTEWTREAIHQAIEETATELEVGMGKVGMPLRVAVTGAGQSPGLDITLELIGKARSEQRISKAVDFVADRINS</sequence>
<accession>A1S7Q6</accession>
<proteinExistence type="inferred from homology"/>
<comment type="function">
    <text evidence="1">Catalyzes the attachment of glutamate to tRNA(Glu) in a two-step reaction: glutamate is first activated by ATP to form Glu-AMP and then transferred to the acceptor end of tRNA(Glu).</text>
</comment>
<comment type="catalytic activity">
    <reaction evidence="1">
        <text>tRNA(Glu) + L-glutamate + ATP = L-glutamyl-tRNA(Glu) + AMP + diphosphate</text>
        <dbReference type="Rhea" id="RHEA:23540"/>
        <dbReference type="Rhea" id="RHEA-COMP:9663"/>
        <dbReference type="Rhea" id="RHEA-COMP:9680"/>
        <dbReference type="ChEBI" id="CHEBI:29985"/>
        <dbReference type="ChEBI" id="CHEBI:30616"/>
        <dbReference type="ChEBI" id="CHEBI:33019"/>
        <dbReference type="ChEBI" id="CHEBI:78442"/>
        <dbReference type="ChEBI" id="CHEBI:78520"/>
        <dbReference type="ChEBI" id="CHEBI:456215"/>
        <dbReference type="EC" id="6.1.1.17"/>
    </reaction>
</comment>
<comment type="subunit">
    <text evidence="1">Monomer.</text>
</comment>
<comment type="subcellular location">
    <subcellularLocation>
        <location evidence="1">Cytoplasm</location>
    </subcellularLocation>
</comment>
<comment type="similarity">
    <text evidence="1">Belongs to the class-I aminoacyl-tRNA synthetase family. Glutamate--tRNA ligase type 1 subfamily.</text>
</comment>
<keyword id="KW-0030">Aminoacyl-tRNA synthetase</keyword>
<keyword id="KW-0067">ATP-binding</keyword>
<keyword id="KW-0963">Cytoplasm</keyword>
<keyword id="KW-0436">Ligase</keyword>
<keyword id="KW-0547">Nucleotide-binding</keyword>
<keyword id="KW-0648">Protein biosynthesis</keyword>
<keyword id="KW-1185">Reference proteome</keyword>